<dbReference type="EMBL" id="CM003141">
    <property type="protein sequence ID" value="KIS71423.1"/>
    <property type="molecule type" value="Genomic_DNA"/>
</dbReference>
<dbReference type="RefSeq" id="XP_011387230.1">
    <property type="nucleotide sequence ID" value="XM_011388928.1"/>
</dbReference>
<dbReference type="SMR" id="Q4PEZ2"/>
<dbReference type="FunCoup" id="Q4PEZ2">
    <property type="interactions" value="761"/>
</dbReference>
<dbReference type="STRING" id="237631.Q4PEZ2"/>
<dbReference type="EnsemblFungi" id="KIS71423">
    <property type="protein sequence ID" value="KIS71423"/>
    <property type="gene ID" value="UMAG_01321"/>
</dbReference>
<dbReference type="GeneID" id="23562386"/>
<dbReference type="KEGG" id="uma:UMAG_01321"/>
<dbReference type="VEuPathDB" id="FungiDB:UMAG_01321"/>
<dbReference type="eggNOG" id="KOG2479">
    <property type="taxonomic scope" value="Eukaryota"/>
</dbReference>
<dbReference type="HOGENOM" id="CLU_024521_2_0_1"/>
<dbReference type="InParanoid" id="Q4PEZ2"/>
<dbReference type="OMA" id="FMDKRDN"/>
<dbReference type="OrthoDB" id="16538at2759"/>
<dbReference type="Proteomes" id="UP000000561">
    <property type="component" value="Chromosome 2"/>
</dbReference>
<dbReference type="GO" id="GO:0005829">
    <property type="term" value="C:cytosol"/>
    <property type="evidence" value="ECO:0007669"/>
    <property type="project" value="EnsemblFungi"/>
</dbReference>
<dbReference type="GO" id="GO:0016282">
    <property type="term" value="C:eukaryotic 43S preinitiation complex"/>
    <property type="evidence" value="ECO:0007669"/>
    <property type="project" value="UniProtKB-UniRule"/>
</dbReference>
<dbReference type="GO" id="GO:0033290">
    <property type="term" value="C:eukaryotic 48S preinitiation complex"/>
    <property type="evidence" value="ECO:0007669"/>
    <property type="project" value="UniProtKB-UniRule"/>
</dbReference>
<dbReference type="GO" id="GO:0005852">
    <property type="term" value="C:eukaryotic translation initiation factor 3 complex"/>
    <property type="evidence" value="ECO:0000318"/>
    <property type="project" value="GO_Central"/>
</dbReference>
<dbReference type="GO" id="GO:0071540">
    <property type="term" value="C:eukaryotic translation initiation factor 3 complex, eIF3e"/>
    <property type="evidence" value="ECO:0007669"/>
    <property type="project" value="EnsemblFungi"/>
</dbReference>
<dbReference type="GO" id="GO:0071541">
    <property type="term" value="C:eukaryotic translation initiation factor 3 complex, eIF3m"/>
    <property type="evidence" value="ECO:0007669"/>
    <property type="project" value="EnsemblFungi"/>
</dbReference>
<dbReference type="GO" id="GO:0098808">
    <property type="term" value="F:mRNA cap binding"/>
    <property type="evidence" value="ECO:0007669"/>
    <property type="project" value="UniProtKB-UniRule"/>
</dbReference>
<dbReference type="GO" id="GO:0003743">
    <property type="term" value="F:translation initiation factor activity"/>
    <property type="evidence" value="ECO:0000318"/>
    <property type="project" value="GO_Central"/>
</dbReference>
<dbReference type="GO" id="GO:0002191">
    <property type="term" value="P:cap-dependent translational initiation"/>
    <property type="evidence" value="ECO:0007669"/>
    <property type="project" value="UniProtKB-UniRule"/>
</dbReference>
<dbReference type="GO" id="GO:0001732">
    <property type="term" value="P:formation of cytoplasmic translation initiation complex"/>
    <property type="evidence" value="ECO:0007669"/>
    <property type="project" value="UniProtKB-UniRule"/>
</dbReference>
<dbReference type="GO" id="GO:0006413">
    <property type="term" value="P:translational initiation"/>
    <property type="evidence" value="ECO:0000318"/>
    <property type="project" value="GO_Central"/>
</dbReference>
<dbReference type="HAMAP" id="MF_03003">
    <property type="entry name" value="eIF3d"/>
    <property type="match status" value="1"/>
</dbReference>
<dbReference type="InterPro" id="IPR007783">
    <property type="entry name" value="eIF3d"/>
</dbReference>
<dbReference type="PANTHER" id="PTHR12399">
    <property type="entry name" value="EUKARYOTIC TRANSLATION INITIATION FACTOR 3 SUBUNIT 7"/>
    <property type="match status" value="1"/>
</dbReference>
<dbReference type="PANTHER" id="PTHR12399:SF0">
    <property type="entry name" value="EUKARYOTIC TRANSLATION INITIATION FACTOR 3 SUBUNIT D"/>
    <property type="match status" value="1"/>
</dbReference>
<dbReference type="Pfam" id="PF05091">
    <property type="entry name" value="eIF-3_zeta"/>
    <property type="match status" value="1"/>
</dbReference>
<dbReference type="PIRSF" id="PIRSF016281">
    <property type="entry name" value="EIF-3_zeta"/>
    <property type="match status" value="1"/>
</dbReference>
<protein>
    <recommendedName>
        <fullName evidence="2">Eukaryotic translation initiation factor 3 subunit D</fullName>
        <shortName evidence="2">eIF3d</shortName>
    </recommendedName>
</protein>
<comment type="function">
    <text evidence="2">mRNA cap-binding component of the eukaryotic translation initiation factor 3 (eIF-3) complex, which is involved in protein synthesis of a specialized repertoire of mRNAs and, together with other initiation factors, stimulates binding of mRNA and methionyl-tRNAi to the 40S ribosome. The eIF-3 complex specifically targets and initiates translation of a subset of mRNAs involved in cell proliferation. In the eIF-3 complex, eif3d specifically recognizes and binds the 7-methylguanosine cap of a subset of mRNAs.</text>
</comment>
<comment type="subunit">
    <text evidence="2">Component of the eukaryotic translation initiation factor 3 (eIF-3) complex.</text>
</comment>
<comment type="subcellular location">
    <subcellularLocation>
        <location evidence="2">Cytoplasm</location>
    </subcellularLocation>
</comment>
<comment type="domain">
    <text evidence="2">The RNA gate region regulates mRNA cap recognition to prevent promiscuous mRNA-binding before assembly of eif3d into the full eukaryotic translation initiation factor 3 (eIF-3) complex.</text>
</comment>
<comment type="similarity">
    <text evidence="2">Belongs to the eIF-3 subunit D family.</text>
</comment>
<accession>Q4PEZ2</accession>
<accession>A0A0D1CYN5</accession>
<keyword id="KW-0963">Cytoplasm</keyword>
<keyword id="KW-0396">Initiation factor</keyword>
<keyword id="KW-0648">Protein biosynthesis</keyword>
<keyword id="KW-1185">Reference proteome</keyword>
<keyword id="KW-0694">RNA-binding</keyword>
<gene>
    <name type="ORF">UMAG_01321</name>
</gene>
<organism>
    <name type="scientific">Mycosarcoma maydis</name>
    <name type="common">Corn smut fungus</name>
    <name type="synonym">Ustilago maydis</name>
    <dbReference type="NCBI Taxonomy" id="5270"/>
    <lineage>
        <taxon>Eukaryota</taxon>
        <taxon>Fungi</taxon>
        <taxon>Dikarya</taxon>
        <taxon>Basidiomycota</taxon>
        <taxon>Ustilaginomycotina</taxon>
        <taxon>Ustilaginomycetes</taxon>
        <taxon>Ustilaginales</taxon>
        <taxon>Ustilaginaceae</taxon>
        <taxon>Mycosarcoma</taxon>
    </lineage>
</organism>
<evidence type="ECO:0000250" key="1">
    <source>
        <dbReference type="UniProtKB" id="K7IM66"/>
    </source>
</evidence>
<evidence type="ECO:0000255" key="2">
    <source>
        <dbReference type="HAMAP-Rule" id="MF_03003"/>
    </source>
</evidence>
<evidence type="ECO:0000256" key="3">
    <source>
        <dbReference type="SAM" id="MobiDB-lite"/>
    </source>
</evidence>
<proteinExistence type="inferred from homology"/>
<name>EIF3D_MYCMD</name>
<feature type="chain" id="PRO_0000364180" description="Eukaryotic translation initiation factor 3 subunit D">
    <location>
        <begin position="1"/>
        <end position="579"/>
    </location>
</feature>
<feature type="region of interest" description="Disordered" evidence="3">
    <location>
        <begin position="1"/>
        <end position="20"/>
    </location>
</feature>
<feature type="region of interest" description="Disordered" evidence="3">
    <location>
        <begin position="51"/>
        <end position="72"/>
    </location>
</feature>
<feature type="region of interest" description="Disordered" evidence="3">
    <location>
        <begin position="109"/>
        <end position="170"/>
    </location>
</feature>
<feature type="region of interest" description="RNA gate" evidence="1">
    <location>
        <begin position="307"/>
        <end position="321"/>
    </location>
</feature>
<feature type="compositionally biased region" description="Low complexity" evidence="3">
    <location>
        <begin position="51"/>
        <end position="64"/>
    </location>
</feature>
<feature type="compositionally biased region" description="Gly residues" evidence="3">
    <location>
        <begin position="120"/>
        <end position="167"/>
    </location>
</feature>
<sequence length="579" mass="62882">MASFKLPELQPDNDLWGPASGSNALPAELKDIPFAPYAKNDKVGRIADWNNASGASNDAANARGGRQGRARDVQQNFGTSAASSAFAYFHGDDEASFSVVDNTRTVASRRGGLGQMSQRGGRGGRGGAGGAGAAGGRGASKFGAGAGRGARGGRGGAAGARRGGGRFGWKEWDKPQRIREASVTVGQDWEQVEEIDFVRLGKLRLEVEEPQDISSYGSLFEYDRSYDRVTVKTAQSLSSIDRIRYNTTTSEDPVIHDISAKEDAQIYMTDSILALLMCATRSVYSWDVIITKTADGKVFFDKRDGGAFDYLTVNENAADPPSEASEGKENEAAAKANAINTPSALSLEATYINQNFAFQVVNEKNVYKLEHENPFYSSDETAPLASCAYRYRKFNLSSEESDPVELVVRTEVDAYTVGASKEKQLITIKSLNEFDARAQGAGGALDWRLKLDSQRGAVVATEMKNNSFKLARFAVQSLLAGADSMKLGYISRANPKDTSRHMILGTSWLKPRELAAQMAVNLSNGWGIVRTVADLARKAEQGKYVLLKDPNKQTIRMYRVPANFGEENDEIVEEDEADE</sequence>
<reference key="1">
    <citation type="journal article" date="2006" name="Nature">
        <title>Insights from the genome of the biotrophic fungal plant pathogen Ustilago maydis.</title>
        <authorList>
            <person name="Kaemper J."/>
            <person name="Kahmann R."/>
            <person name="Boelker M."/>
            <person name="Ma L.-J."/>
            <person name="Brefort T."/>
            <person name="Saville B.J."/>
            <person name="Banuett F."/>
            <person name="Kronstad J.W."/>
            <person name="Gold S.E."/>
            <person name="Mueller O."/>
            <person name="Perlin M.H."/>
            <person name="Woesten H.A.B."/>
            <person name="de Vries R."/>
            <person name="Ruiz-Herrera J."/>
            <person name="Reynaga-Pena C.G."/>
            <person name="Snetselaar K."/>
            <person name="McCann M."/>
            <person name="Perez-Martin J."/>
            <person name="Feldbruegge M."/>
            <person name="Basse C.W."/>
            <person name="Steinberg G."/>
            <person name="Ibeas J.I."/>
            <person name="Holloman W."/>
            <person name="Guzman P."/>
            <person name="Farman M.L."/>
            <person name="Stajich J.E."/>
            <person name="Sentandreu R."/>
            <person name="Gonzalez-Prieto J.M."/>
            <person name="Kennell J.C."/>
            <person name="Molina L."/>
            <person name="Schirawski J."/>
            <person name="Mendoza-Mendoza A."/>
            <person name="Greilinger D."/>
            <person name="Muench K."/>
            <person name="Roessel N."/>
            <person name="Scherer M."/>
            <person name="Vranes M."/>
            <person name="Ladendorf O."/>
            <person name="Vincon V."/>
            <person name="Fuchs U."/>
            <person name="Sandrock B."/>
            <person name="Meng S."/>
            <person name="Ho E.C.H."/>
            <person name="Cahill M.J."/>
            <person name="Boyce K.J."/>
            <person name="Klose J."/>
            <person name="Klosterman S.J."/>
            <person name="Deelstra H.J."/>
            <person name="Ortiz-Castellanos L."/>
            <person name="Li W."/>
            <person name="Sanchez-Alonso P."/>
            <person name="Schreier P.H."/>
            <person name="Haeuser-Hahn I."/>
            <person name="Vaupel M."/>
            <person name="Koopmann E."/>
            <person name="Friedrich G."/>
            <person name="Voss H."/>
            <person name="Schlueter T."/>
            <person name="Margolis J."/>
            <person name="Platt D."/>
            <person name="Swimmer C."/>
            <person name="Gnirke A."/>
            <person name="Chen F."/>
            <person name="Vysotskaia V."/>
            <person name="Mannhaupt G."/>
            <person name="Gueldener U."/>
            <person name="Muensterkoetter M."/>
            <person name="Haase D."/>
            <person name="Oesterheld M."/>
            <person name="Mewes H.-W."/>
            <person name="Mauceli E.W."/>
            <person name="DeCaprio D."/>
            <person name="Wade C.M."/>
            <person name="Butler J."/>
            <person name="Young S.K."/>
            <person name="Jaffe D.B."/>
            <person name="Calvo S.E."/>
            <person name="Nusbaum C."/>
            <person name="Galagan J.E."/>
            <person name="Birren B.W."/>
        </authorList>
    </citation>
    <scope>NUCLEOTIDE SEQUENCE [LARGE SCALE GENOMIC DNA]</scope>
    <source>
        <strain>DSM 14603 / FGSC 9021 / UM521</strain>
    </source>
</reference>
<reference key="2">
    <citation type="submission" date="2014-09" db="EMBL/GenBank/DDBJ databases">
        <authorList>
            <person name="Gueldener U."/>
            <person name="Muensterkoetter M."/>
            <person name="Walter M.C."/>
            <person name="Mannhaupt G."/>
            <person name="Kahmann R."/>
        </authorList>
    </citation>
    <scope>GENOME REANNOTATION</scope>
    <source>
        <strain>DSM 14603 / FGSC 9021 / UM521</strain>
    </source>
</reference>